<evidence type="ECO:0000250" key="1"/>
<evidence type="ECO:0000250" key="2">
    <source>
        <dbReference type="UniProtKB" id="Q561R1"/>
    </source>
</evidence>
<evidence type="ECO:0000250" key="3">
    <source>
        <dbReference type="UniProtKB" id="Q96BT3"/>
    </source>
</evidence>
<evidence type="ECO:0000256" key="4">
    <source>
        <dbReference type="SAM" id="MobiDB-lite"/>
    </source>
</evidence>
<evidence type="ECO:0000305" key="5"/>
<name>CENPT_MOUSE</name>
<proteinExistence type="evidence at transcript level"/>
<protein>
    <recommendedName>
        <fullName>Centromere protein T</fullName>
        <shortName>CENP-T</shortName>
    </recommendedName>
</protein>
<keyword id="KW-0131">Cell cycle</keyword>
<keyword id="KW-0132">Cell division</keyword>
<keyword id="KW-0137">Centromere</keyword>
<keyword id="KW-0158">Chromosome</keyword>
<keyword id="KW-0238">DNA-binding</keyword>
<keyword id="KW-0995">Kinetochore</keyword>
<keyword id="KW-0498">Mitosis</keyword>
<keyword id="KW-0539">Nucleus</keyword>
<keyword id="KW-0597">Phosphoprotein</keyword>
<keyword id="KW-1185">Reference proteome</keyword>
<organism>
    <name type="scientific">Mus musculus</name>
    <name type="common">Mouse</name>
    <dbReference type="NCBI Taxonomy" id="10090"/>
    <lineage>
        <taxon>Eukaryota</taxon>
        <taxon>Metazoa</taxon>
        <taxon>Chordata</taxon>
        <taxon>Craniata</taxon>
        <taxon>Vertebrata</taxon>
        <taxon>Euteleostomi</taxon>
        <taxon>Mammalia</taxon>
        <taxon>Eutheria</taxon>
        <taxon>Euarchontoglires</taxon>
        <taxon>Glires</taxon>
        <taxon>Rodentia</taxon>
        <taxon>Myomorpha</taxon>
        <taxon>Muroidea</taxon>
        <taxon>Muridae</taxon>
        <taxon>Murinae</taxon>
        <taxon>Mus</taxon>
        <taxon>Mus</taxon>
    </lineage>
</organism>
<feature type="chain" id="PRO_0000249516" description="Centromere protein T">
    <location>
        <begin position="1"/>
        <end position="515"/>
    </location>
</feature>
<feature type="region of interest" description="Disordered" evidence="4">
    <location>
        <begin position="24"/>
        <end position="156"/>
    </location>
</feature>
<feature type="region of interest" description="Flexible stalk domain" evidence="1">
    <location>
        <begin position="94"/>
        <end position="375"/>
    </location>
</feature>
<feature type="region of interest" description="Disordered" evidence="4">
    <location>
        <begin position="271"/>
        <end position="411"/>
    </location>
</feature>
<feature type="compositionally biased region" description="Basic residues" evidence="4">
    <location>
        <begin position="29"/>
        <end position="44"/>
    </location>
</feature>
<feature type="compositionally biased region" description="Polar residues" evidence="4">
    <location>
        <begin position="45"/>
        <end position="58"/>
    </location>
</feature>
<feature type="compositionally biased region" description="Polar residues" evidence="4">
    <location>
        <begin position="296"/>
        <end position="306"/>
    </location>
</feature>
<feature type="modified residue" description="Phosphothreonine" evidence="3">
    <location>
        <position position="86"/>
    </location>
</feature>
<feature type="modified residue" description="Phosphoserine" evidence="2">
    <location>
        <position position="313"/>
    </location>
</feature>
<feature type="modified residue" description="Phosphoserine" evidence="3">
    <location>
        <position position="333"/>
    </location>
</feature>
<feature type="modified residue" description="Phosphoserine" evidence="3">
    <location>
        <position position="345"/>
    </location>
</feature>
<feature type="modified residue" description="Phosphoserine" evidence="3">
    <location>
        <position position="346"/>
    </location>
</feature>
<feature type="modified residue" description="Phosphoserine" evidence="3">
    <location>
        <position position="357"/>
    </location>
</feature>
<feature type="modified residue" description="Phosphoserine" evidence="2">
    <location>
        <position position="376"/>
    </location>
</feature>
<feature type="sequence conflict" description="In Ref. 1; BAE25464." evidence="5" ref="1">
    <original>S</original>
    <variation>V</variation>
    <location>
        <position position="5"/>
    </location>
</feature>
<feature type="sequence conflict" description="In Ref. 1; BAE39471." evidence="5" ref="1">
    <original>K</original>
    <variation>R</variation>
    <location>
        <position position="157"/>
    </location>
</feature>
<feature type="sequence conflict" description="In Ref. 1; BAC40776." evidence="5" ref="1">
    <original>QS</original>
    <variation>KG</variation>
    <location>
        <begin position="302"/>
        <end position="303"/>
    </location>
</feature>
<comment type="function">
    <text evidence="3">Component of the CENPA-NAC (nucleosome-associated) complex, a complex that plays a central role in assembly of kinetochore proteins, mitotic progression and chromosome segregation. The CENPA-NAC complex recruits the CENPA-CAD (nucleosome distal) complex and may be involved in incorporation of newly synthesized CENPA into centromeres. Part of a nucleosome-associated complex that binds specifically to histone H3-containing nucleosomes at the centromere, as opposed to nucleosomes containing CENPA. Component of the heterotetrameric CENP-T-W-S-X complex that binds and supercoils DNA, and plays an important role in kinetochore assembly. CENPT has a fundamental role in kinetochore assembly and function. It is one of the inner kinetochore proteins, with most further proteins binding downstream. Required for normal chromosome organization and normal progress through mitosis.</text>
</comment>
<comment type="subunit">
    <text evidence="3">Component of the CENPA-CAD complex, composed of CENPI, CENPK, CENPL, CENPO, CENPP, CENPQ, CENPR and CENPS. The CENPA-CAD complex is probably recruited on centromeres by the CENPA-NAC complex, at least composed of CENPA, CENPC, CENPH, CENPM, CENPN, CENPT and CENPU. Identified in a centromeric complex containing histones H2A, H2B, H3 and H4, and at least CENPA, CENPB, CENPC, CENPT, CENPN, HJURP, SUPT16H, SSRP1 and RSF1. Interacts (via N-terminus) with the NDC80 complex. Heterodimer with CENPW; this dimer coassembles with CENPS-CENPX heterodimers at centromeres to form the tetrameric CENP-T-W-S-X complex.</text>
</comment>
<comment type="subcellular location">
    <subcellularLocation>
        <location evidence="3">Nucleus</location>
    </subcellularLocation>
    <subcellularLocation>
        <location evidence="3">Chromosome</location>
        <location evidence="3">Centromere</location>
    </subcellularLocation>
    <subcellularLocation>
        <location evidence="3">Chromosome</location>
        <location evidence="3">Centromere</location>
        <location evidence="3">Kinetochore</location>
    </subcellularLocation>
    <text evidence="3">Constitutively localizes to centromeres throughout the cell cycle, and to kinetochores during mitosis. Localizes to the inner kinetochore, and may connect it to the outer kinetochore via its N-terminus.</text>
</comment>
<comment type="domain">
    <text evidence="1">The largest part of the sequence forms an elongated and flexible stalk structure that is connected to a C-terminal globular domain with a histone-type fold.</text>
</comment>
<comment type="PTM">
    <text evidence="3">Dynamically phosphorylated during the cell cycle. Phosphorylated during G2 phase, metaphase and anaphase, but not during telophase or G1 phase.</text>
</comment>
<comment type="similarity">
    <text evidence="5">Belongs to the CENP-T/CNN1 family.</text>
</comment>
<comment type="sequence caution" evidence="5">
    <conflict type="frameshift">
        <sequence resource="EMBL-CDS" id="BAC40776"/>
    </conflict>
</comment>
<sequence length="515" mass="56242">MADLSFSDGDPTVRTLLRRVLETADSRTPMRRRSTRINAQRRRSQTPYSNRQGSQTKTSARKQSHGARSVGRSTRVQGRGRLEEQTPRTLLRNILLTAPESSTVMPDPVVKPAQVPEVARSSRRESSRGSLELHLPELEPPSTLAPGLTAPGKRKQKLRLSVFQQEVDQGLPLSQEPRRSRSADVSSLASSFNLTFVLPGQPETVERPGLARRRPIRQLVNAGALLQDLEDNSLASALPGDSHRTPVAALPMDVGLEDTQPFSQSLAAFSLSGKHSLPSPSRPGVEDVERVMGPPSSGTRLQSRMSRSGPAASPSPFLEPQPPPAEPREAVGSNEAAEPKDQEGSSGYEETSARPASGELSSSTHDSLPAEQPPPSPGVAVLSSEPLESVTAKCPSRTQTAGPRRRQDPHKAGLSPYVKFFSFCTKMPVEKTALEIVEKCLDKYFQHLCNDLEVFASHAGRKIVKPEDLLLLMRRQGLVTDQVSQHVLVERYLPLEYRQQLIPCAFSGNSVFPAQ</sequence>
<dbReference type="EMBL" id="AK089172">
    <property type="protein sequence ID" value="BAC40776.1"/>
    <property type="status" value="ALT_FRAME"/>
    <property type="molecule type" value="mRNA"/>
</dbReference>
<dbReference type="EMBL" id="AK090340">
    <property type="protein sequence ID" value="BAC41176.1"/>
    <property type="molecule type" value="mRNA"/>
</dbReference>
<dbReference type="EMBL" id="AK143613">
    <property type="protein sequence ID" value="BAE25464.1"/>
    <property type="molecule type" value="mRNA"/>
</dbReference>
<dbReference type="EMBL" id="AK164039">
    <property type="protein sequence ID" value="BAE37599.1"/>
    <property type="molecule type" value="mRNA"/>
</dbReference>
<dbReference type="EMBL" id="AK167376">
    <property type="protein sequence ID" value="BAE39471.1"/>
    <property type="molecule type" value="mRNA"/>
</dbReference>
<dbReference type="EMBL" id="BC022690">
    <property type="protein sequence ID" value="AAH22690.1"/>
    <property type="molecule type" value="mRNA"/>
</dbReference>
<dbReference type="EMBL" id="BC121824">
    <property type="protein sequence ID" value="AAI21825.1"/>
    <property type="molecule type" value="mRNA"/>
</dbReference>
<dbReference type="CCDS" id="CCDS22615.1"/>
<dbReference type="RefSeq" id="NP_796124.1">
    <property type="nucleotide sequence ID" value="NM_177150.2"/>
</dbReference>
<dbReference type="RefSeq" id="XP_011246709.1">
    <property type="nucleotide sequence ID" value="XM_011248407.3"/>
</dbReference>
<dbReference type="SMR" id="Q3TJM4"/>
<dbReference type="ComplexPortal" id="CPX-5704">
    <property type="entry name" value="Kinetochore CCAN complex"/>
</dbReference>
<dbReference type="FunCoup" id="Q3TJM4">
    <property type="interactions" value="1214"/>
</dbReference>
<dbReference type="STRING" id="10090.ENSMUSP00000038188"/>
<dbReference type="iPTMnet" id="Q3TJM4"/>
<dbReference type="PhosphoSitePlus" id="Q3TJM4"/>
<dbReference type="jPOST" id="Q3TJM4"/>
<dbReference type="PaxDb" id="10090-ENSMUSP00000038188"/>
<dbReference type="PeptideAtlas" id="Q3TJM4"/>
<dbReference type="ProteomicsDB" id="283882"/>
<dbReference type="Pumba" id="Q3TJM4"/>
<dbReference type="Antibodypedia" id="29639">
    <property type="antibodies" value="97 antibodies from 23 providers"/>
</dbReference>
<dbReference type="DNASU" id="320394"/>
<dbReference type="Ensembl" id="ENSMUST00000040776.6">
    <property type="protein sequence ID" value="ENSMUSP00000038188.5"/>
    <property type="gene ID" value="ENSMUSG00000036672.6"/>
</dbReference>
<dbReference type="GeneID" id="320394"/>
<dbReference type="KEGG" id="mmu:320394"/>
<dbReference type="UCSC" id="uc009nef.1">
    <property type="organism name" value="mouse"/>
</dbReference>
<dbReference type="AGR" id="MGI:2443939"/>
<dbReference type="CTD" id="80152"/>
<dbReference type="MGI" id="MGI:2443939">
    <property type="gene designation" value="Cenpt"/>
</dbReference>
<dbReference type="VEuPathDB" id="HostDB:ENSMUSG00000036672"/>
<dbReference type="eggNOG" id="ENOG502RZH1">
    <property type="taxonomic scope" value="Eukaryota"/>
</dbReference>
<dbReference type="GeneTree" id="ENSGT00390000003044"/>
<dbReference type="HOGENOM" id="CLU_040180_0_0_1"/>
<dbReference type="InParanoid" id="Q3TJM4"/>
<dbReference type="OMA" id="YFQHLCN"/>
<dbReference type="PhylomeDB" id="Q3TJM4"/>
<dbReference type="TreeFam" id="TF332946"/>
<dbReference type="Reactome" id="R-MMU-141444">
    <property type="pathway name" value="Amplification of signal from unattached kinetochores via a MAD2 inhibitory signal"/>
</dbReference>
<dbReference type="Reactome" id="R-MMU-2467813">
    <property type="pathway name" value="Separation of Sister Chromatids"/>
</dbReference>
<dbReference type="Reactome" id="R-MMU-2500257">
    <property type="pathway name" value="Resolution of Sister Chromatid Cohesion"/>
</dbReference>
<dbReference type="Reactome" id="R-MMU-5663220">
    <property type="pathway name" value="RHO GTPases Activate Formins"/>
</dbReference>
<dbReference type="Reactome" id="R-MMU-606279">
    <property type="pathway name" value="Deposition of new CENPA-containing nucleosomes at the centromere"/>
</dbReference>
<dbReference type="Reactome" id="R-MMU-68877">
    <property type="pathway name" value="Mitotic Prometaphase"/>
</dbReference>
<dbReference type="Reactome" id="R-MMU-9648025">
    <property type="pathway name" value="EML4 and NUDC in mitotic spindle formation"/>
</dbReference>
<dbReference type="BioGRID-ORCS" id="320394">
    <property type="hits" value="9 hits in 76 CRISPR screens"/>
</dbReference>
<dbReference type="ChiTaRS" id="Cenpt">
    <property type="organism name" value="mouse"/>
</dbReference>
<dbReference type="PRO" id="PR:Q3TJM4"/>
<dbReference type="Proteomes" id="UP000000589">
    <property type="component" value="Chromosome 8"/>
</dbReference>
<dbReference type="RNAct" id="Q3TJM4">
    <property type="molecule type" value="protein"/>
</dbReference>
<dbReference type="Bgee" id="ENSMUSG00000036672">
    <property type="expression patterns" value="Expressed in yolk sac and 230 other cell types or tissues"/>
</dbReference>
<dbReference type="ExpressionAtlas" id="Q3TJM4">
    <property type="expression patterns" value="baseline and differential"/>
</dbReference>
<dbReference type="GO" id="GO:0000775">
    <property type="term" value="C:chromosome, centromeric region"/>
    <property type="evidence" value="ECO:0000250"/>
    <property type="project" value="UniProtKB"/>
</dbReference>
<dbReference type="GO" id="GO:0000939">
    <property type="term" value="C:inner kinetochore"/>
    <property type="evidence" value="ECO:0000266"/>
    <property type="project" value="ComplexPortal"/>
</dbReference>
<dbReference type="GO" id="GO:0016604">
    <property type="term" value="C:nuclear body"/>
    <property type="evidence" value="ECO:0007669"/>
    <property type="project" value="Ensembl"/>
</dbReference>
<dbReference type="GO" id="GO:0005634">
    <property type="term" value="C:nucleus"/>
    <property type="evidence" value="ECO:0000303"/>
    <property type="project" value="ComplexPortal"/>
</dbReference>
<dbReference type="GO" id="GO:0003677">
    <property type="term" value="F:DNA binding"/>
    <property type="evidence" value="ECO:0007669"/>
    <property type="project" value="UniProtKB-KW"/>
</dbReference>
<dbReference type="GO" id="GO:0046982">
    <property type="term" value="F:protein heterodimerization activity"/>
    <property type="evidence" value="ECO:0007669"/>
    <property type="project" value="InterPro"/>
</dbReference>
<dbReference type="GO" id="GO:0051301">
    <property type="term" value="P:cell division"/>
    <property type="evidence" value="ECO:0007669"/>
    <property type="project" value="UniProtKB-KW"/>
</dbReference>
<dbReference type="GO" id="GO:0051276">
    <property type="term" value="P:chromosome organization"/>
    <property type="evidence" value="ECO:0000250"/>
    <property type="project" value="UniProtKB"/>
</dbReference>
<dbReference type="GO" id="GO:0007059">
    <property type="term" value="P:chromosome segregation"/>
    <property type="evidence" value="ECO:0000250"/>
    <property type="project" value="UniProtKB"/>
</dbReference>
<dbReference type="GO" id="GO:0051382">
    <property type="term" value="P:kinetochore assembly"/>
    <property type="evidence" value="ECO:0000250"/>
    <property type="project" value="UniProtKB"/>
</dbReference>
<dbReference type="GO" id="GO:0000278">
    <property type="term" value="P:mitotic cell cycle"/>
    <property type="evidence" value="ECO:0000250"/>
    <property type="project" value="UniProtKB"/>
</dbReference>
<dbReference type="CDD" id="cd22920">
    <property type="entry name" value="HFD_CENP-T"/>
    <property type="match status" value="1"/>
</dbReference>
<dbReference type="Gene3D" id="1.10.20.10">
    <property type="entry name" value="Histone, subunit A"/>
    <property type="match status" value="1"/>
</dbReference>
<dbReference type="InterPro" id="IPR028255">
    <property type="entry name" value="CENP-T"/>
</dbReference>
<dbReference type="InterPro" id="IPR035425">
    <property type="entry name" value="CENP-T/H4_C"/>
</dbReference>
<dbReference type="InterPro" id="IPR032373">
    <property type="entry name" value="CENP-T_N"/>
</dbReference>
<dbReference type="InterPro" id="IPR009072">
    <property type="entry name" value="Histone-fold"/>
</dbReference>
<dbReference type="PANTHER" id="PTHR46904">
    <property type="entry name" value="CENTROMERE PROTEIN T"/>
    <property type="match status" value="1"/>
</dbReference>
<dbReference type="PANTHER" id="PTHR46904:SF1">
    <property type="entry name" value="CENTROMERE PROTEIN T"/>
    <property type="match status" value="1"/>
</dbReference>
<dbReference type="Pfam" id="PF15511">
    <property type="entry name" value="CENP-T_C"/>
    <property type="match status" value="1"/>
</dbReference>
<dbReference type="Pfam" id="PF16171">
    <property type="entry name" value="CENP-T_N"/>
    <property type="match status" value="1"/>
</dbReference>
<dbReference type="SUPFAM" id="SSF47113">
    <property type="entry name" value="Histone-fold"/>
    <property type="match status" value="1"/>
</dbReference>
<accession>Q3TJM4</accession>
<accession>Q3TPY6</accession>
<accession>Q3UPD2</accession>
<accession>Q8BTH0</accession>
<accession>Q8BTP2</accession>
<accession>Q8R5E9</accession>
<gene>
    <name type="primary">Cenpt</name>
</gene>
<reference key="1">
    <citation type="journal article" date="2005" name="Science">
        <title>The transcriptional landscape of the mammalian genome.</title>
        <authorList>
            <person name="Carninci P."/>
            <person name="Kasukawa T."/>
            <person name="Katayama S."/>
            <person name="Gough J."/>
            <person name="Frith M.C."/>
            <person name="Maeda N."/>
            <person name="Oyama R."/>
            <person name="Ravasi T."/>
            <person name="Lenhard B."/>
            <person name="Wells C."/>
            <person name="Kodzius R."/>
            <person name="Shimokawa K."/>
            <person name="Bajic V.B."/>
            <person name="Brenner S.E."/>
            <person name="Batalov S."/>
            <person name="Forrest A.R."/>
            <person name="Zavolan M."/>
            <person name="Davis M.J."/>
            <person name="Wilming L.G."/>
            <person name="Aidinis V."/>
            <person name="Allen J.E."/>
            <person name="Ambesi-Impiombato A."/>
            <person name="Apweiler R."/>
            <person name="Aturaliya R.N."/>
            <person name="Bailey T.L."/>
            <person name="Bansal M."/>
            <person name="Baxter L."/>
            <person name="Beisel K.W."/>
            <person name="Bersano T."/>
            <person name="Bono H."/>
            <person name="Chalk A.M."/>
            <person name="Chiu K.P."/>
            <person name="Choudhary V."/>
            <person name="Christoffels A."/>
            <person name="Clutterbuck D.R."/>
            <person name="Crowe M.L."/>
            <person name="Dalla E."/>
            <person name="Dalrymple B.P."/>
            <person name="de Bono B."/>
            <person name="Della Gatta G."/>
            <person name="di Bernardo D."/>
            <person name="Down T."/>
            <person name="Engstrom P."/>
            <person name="Fagiolini M."/>
            <person name="Faulkner G."/>
            <person name="Fletcher C.F."/>
            <person name="Fukushima T."/>
            <person name="Furuno M."/>
            <person name="Futaki S."/>
            <person name="Gariboldi M."/>
            <person name="Georgii-Hemming P."/>
            <person name="Gingeras T.R."/>
            <person name="Gojobori T."/>
            <person name="Green R.E."/>
            <person name="Gustincich S."/>
            <person name="Harbers M."/>
            <person name="Hayashi Y."/>
            <person name="Hensch T.K."/>
            <person name="Hirokawa N."/>
            <person name="Hill D."/>
            <person name="Huminiecki L."/>
            <person name="Iacono M."/>
            <person name="Ikeo K."/>
            <person name="Iwama A."/>
            <person name="Ishikawa T."/>
            <person name="Jakt M."/>
            <person name="Kanapin A."/>
            <person name="Katoh M."/>
            <person name="Kawasawa Y."/>
            <person name="Kelso J."/>
            <person name="Kitamura H."/>
            <person name="Kitano H."/>
            <person name="Kollias G."/>
            <person name="Krishnan S.P."/>
            <person name="Kruger A."/>
            <person name="Kummerfeld S.K."/>
            <person name="Kurochkin I.V."/>
            <person name="Lareau L.F."/>
            <person name="Lazarevic D."/>
            <person name="Lipovich L."/>
            <person name="Liu J."/>
            <person name="Liuni S."/>
            <person name="McWilliam S."/>
            <person name="Madan Babu M."/>
            <person name="Madera M."/>
            <person name="Marchionni L."/>
            <person name="Matsuda H."/>
            <person name="Matsuzawa S."/>
            <person name="Miki H."/>
            <person name="Mignone F."/>
            <person name="Miyake S."/>
            <person name="Morris K."/>
            <person name="Mottagui-Tabar S."/>
            <person name="Mulder N."/>
            <person name="Nakano N."/>
            <person name="Nakauchi H."/>
            <person name="Ng P."/>
            <person name="Nilsson R."/>
            <person name="Nishiguchi S."/>
            <person name="Nishikawa S."/>
            <person name="Nori F."/>
            <person name="Ohara O."/>
            <person name="Okazaki Y."/>
            <person name="Orlando V."/>
            <person name="Pang K.C."/>
            <person name="Pavan W.J."/>
            <person name="Pavesi G."/>
            <person name="Pesole G."/>
            <person name="Petrovsky N."/>
            <person name="Piazza S."/>
            <person name="Reed J."/>
            <person name="Reid J.F."/>
            <person name="Ring B.Z."/>
            <person name="Ringwald M."/>
            <person name="Rost B."/>
            <person name="Ruan Y."/>
            <person name="Salzberg S.L."/>
            <person name="Sandelin A."/>
            <person name="Schneider C."/>
            <person name="Schoenbach C."/>
            <person name="Sekiguchi K."/>
            <person name="Semple C.A."/>
            <person name="Seno S."/>
            <person name="Sessa L."/>
            <person name="Sheng Y."/>
            <person name="Shibata Y."/>
            <person name="Shimada H."/>
            <person name="Shimada K."/>
            <person name="Silva D."/>
            <person name="Sinclair B."/>
            <person name="Sperling S."/>
            <person name="Stupka E."/>
            <person name="Sugiura K."/>
            <person name="Sultana R."/>
            <person name="Takenaka Y."/>
            <person name="Taki K."/>
            <person name="Tammoja K."/>
            <person name="Tan S.L."/>
            <person name="Tang S."/>
            <person name="Taylor M.S."/>
            <person name="Tegner J."/>
            <person name="Teichmann S.A."/>
            <person name="Ueda H.R."/>
            <person name="van Nimwegen E."/>
            <person name="Verardo R."/>
            <person name="Wei C.L."/>
            <person name="Yagi K."/>
            <person name="Yamanishi H."/>
            <person name="Zabarovsky E."/>
            <person name="Zhu S."/>
            <person name="Zimmer A."/>
            <person name="Hide W."/>
            <person name="Bult C."/>
            <person name="Grimmond S.M."/>
            <person name="Teasdale R.D."/>
            <person name="Liu E.T."/>
            <person name="Brusic V."/>
            <person name="Quackenbush J."/>
            <person name="Wahlestedt C."/>
            <person name="Mattick J.S."/>
            <person name="Hume D.A."/>
            <person name="Kai C."/>
            <person name="Sasaki D."/>
            <person name="Tomaru Y."/>
            <person name="Fukuda S."/>
            <person name="Kanamori-Katayama M."/>
            <person name="Suzuki M."/>
            <person name="Aoki J."/>
            <person name="Arakawa T."/>
            <person name="Iida J."/>
            <person name="Imamura K."/>
            <person name="Itoh M."/>
            <person name="Kato T."/>
            <person name="Kawaji H."/>
            <person name="Kawagashira N."/>
            <person name="Kawashima T."/>
            <person name="Kojima M."/>
            <person name="Kondo S."/>
            <person name="Konno H."/>
            <person name="Nakano K."/>
            <person name="Ninomiya N."/>
            <person name="Nishio T."/>
            <person name="Okada M."/>
            <person name="Plessy C."/>
            <person name="Shibata K."/>
            <person name="Shiraki T."/>
            <person name="Suzuki S."/>
            <person name="Tagami M."/>
            <person name="Waki K."/>
            <person name="Watahiki A."/>
            <person name="Okamura-Oho Y."/>
            <person name="Suzuki H."/>
            <person name="Kawai J."/>
            <person name="Hayashizaki Y."/>
        </authorList>
    </citation>
    <scope>NUCLEOTIDE SEQUENCE [LARGE SCALE MRNA]</scope>
    <source>
        <strain>C57BL/6J</strain>
        <tissue>Lung</tissue>
        <tissue>Placenta</tissue>
        <tissue>Spleen</tissue>
    </source>
</reference>
<reference key="2">
    <citation type="journal article" date="2004" name="Genome Res.">
        <title>The status, quality, and expansion of the NIH full-length cDNA project: the Mammalian Gene Collection (MGC).</title>
        <authorList>
            <consortium name="The MGC Project Team"/>
        </authorList>
    </citation>
    <scope>NUCLEOTIDE SEQUENCE [LARGE SCALE MRNA]</scope>
    <source>
        <strain>FVB/N</strain>
        <tissue>Mammary tumor</tissue>
    </source>
</reference>